<reference key="1">
    <citation type="submission" date="2008-10" db="EMBL/GenBank/DDBJ databases">
        <title>Complete sequence of Desulfovibrio vulgaris str. 'Miyazaki F'.</title>
        <authorList>
            <person name="Lucas S."/>
            <person name="Copeland A."/>
            <person name="Lapidus A."/>
            <person name="Glavina del Rio T."/>
            <person name="Dalin E."/>
            <person name="Tice H."/>
            <person name="Bruce D."/>
            <person name="Goodwin L."/>
            <person name="Pitluck S."/>
            <person name="Sims D."/>
            <person name="Brettin T."/>
            <person name="Detter J.C."/>
            <person name="Han C."/>
            <person name="Larimer F."/>
            <person name="Land M."/>
            <person name="Hauser L."/>
            <person name="Kyrpides N."/>
            <person name="Mikhailova N."/>
            <person name="Hazen T.C."/>
            <person name="Richardson P."/>
        </authorList>
    </citation>
    <scope>NUCLEOTIDE SEQUENCE [LARGE SCALE GENOMIC DNA]</scope>
    <source>
        <strain>DSM 19637 / Miyazaki F</strain>
    </source>
</reference>
<name>RISB_NITV9</name>
<protein>
    <recommendedName>
        <fullName evidence="1">6,7-dimethyl-8-ribityllumazine synthase</fullName>
        <shortName evidence="1">DMRL synthase</shortName>
        <shortName evidence="1">LS</shortName>
        <shortName evidence="1">Lumazine synthase</shortName>
        <ecNumber evidence="1">2.5.1.78</ecNumber>
    </recommendedName>
</protein>
<proteinExistence type="inferred from homology"/>
<accession>B8DJF2</accession>
<keyword id="KW-0686">Riboflavin biosynthesis</keyword>
<keyword id="KW-0808">Transferase</keyword>
<sequence>MLHVKTIEGQFDAKGLKFAIIATRFNDFIVDRLVGGAVDYLARHGCEREDMTIVRIPGAFEMPIVAQKLAKSGRYHGIIALGAVIRGATPHFDFVAGEATKGLAHISLDSGVPVGFGLLTTDSIEQAIERAGTKAGNKGVEAAAAVLETVRVMEQL</sequence>
<comment type="function">
    <text evidence="1">Catalyzes the formation of 6,7-dimethyl-8-ribityllumazine by condensation of 5-amino-6-(D-ribitylamino)uracil with 3,4-dihydroxy-2-butanone 4-phosphate. This is the penultimate step in the biosynthesis of riboflavin.</text>
</comment>
<comment type="catalytic activity">
    <reaction evidence="1">
        <text>(2S)-2-hydroxy-3-oxobutyl phosphate + 5-amino-6-(D-ribitylamino)uracil = 6,7-dimethyl-8-(1-D-ribityl)lumazine + phosphate + 2 H2O + H(+)</text>
        <dbReference type="Rhea" id="RHEA:26152"/>
        <dbReference type="ChEBI" id="CHEBI:15377"/>
        <dbReference type="ChEBI" id="CHEBI:15378"/>
        <dbReference type="ChEBI" id="CHEBI:15934"/>
        <dbReference type="ChEBI" id="CHEBI:43474"/>
        <dbReference type="ChEBI" id="CHEBI:58201"/>
        <dbReference type="ChEBI" id="CHEBI:58830"/>
        <dbReference type="EC" id="2.5.1.78"/>
    </reaction>
</comment>
<comment type="pathway">
    <text evidence="1">Cofactor biosynthesis; riboflavin biosynthesis; riboflavin from 2-hydroxy-3-oxobutyl phosphate and 5-amino-6-(D-ribitylamino)uracil: step 1/2.</text>
</comment>
<comment type="similarity">
    <text evidence="1">Belongs to the DMRL synthase family.</text>
</comment>
<evidence type="ECO:0000255" key="1">
    <source>
        <dbReference type="HAMAP-Rule" id="MF_00178"/>
    </source>
</evidence>
<gene>
    <name evidence="1" type="primary">ribH</name>
    <name type="ordered locus">DvMF_3092</name>
</gene>
<feature type="chain" id="PRO_1000195480" description="6,7-dimethyl-8-ribityllumazine synthase">
    <location>
        <begin position="1"/>
        <end position="156"/>
    </location>
</feature>
<feature type="active site" description="Proton donor" evidence="1">
    <location>
        <position position="91"/>
    </location>
</feature>
<feature type="binding site" evidence="1">
    <location>
        <position position="25"/>
    </location>
    <ligand>
        <name>5-amino-6-(D-ribitylamino)uracil</name>
        <dbReference type="ChEBI" id="CHEBI:15934"/>
    </ligand>
</feature>
<feature type="binding site" evidence="1">
    <location>
        <begin position="59"/>
        <end position="61"/>
    </location>
    <ligand>
        <name>5-amino-6-(D-ribitylamino)uracil</name>
        <dbReference type="ChEBI" id="CHEBI:15934"/>
    </ligand>
</feature>
<feature type="binding site" evidence="1">
    <location>
        <begin position="83"/>
        <end position="85"/>
    </location>
    <ligand>
        <name>5-amino-6-(D-ribitylamino)uracil</name>
        <dbReference type="ChEBI" id="CHEBI:15934"/>
    </ligand>
</feature>
<feature type="binding site" evidence="1">
    <location>
        <begin position="88"/>
        <end position="89"/>
    </location>
    <ligand>
        <name>(2S)-2-hydroxy-3-oxobutyl phosphate</name>
        <dbReference type="ChEBI" id="CHEBI:58830"/>
    </ligand>
</feature>
<feature type="binding site" evidence="1">
    <location>
        <position position="116"/>
    </location>
    <ligand>
        <name>5-amino-6-(D-ribitylamino)uracil</name>
        <dbReference type="ChEBI" id="CHEBI:15934"/>
    </ligand>
</feature>
<feature type="binding site" evidence="1">
    <location>
        <position position="130"/>
    </location>
    <ligand>
        <name>(2S)-2-hydroxy-3-oxobutyl phosphate</name>
        <dbReference type="ChEBI" id="CHEBI:58830"/>
    </ligand>
</feature>
<organism>
    <name type="scientific">Nitratidesulfovibrio vulgaris (strain DSM 19637 / Miyazaki F)</name>
    <name type="common">Desulfovibrio vulgaris</name>
    <dbReference type="NCBI Taxonomy" id="883"/>
    <lineage>
        <taxon>Bacteria</taxon>
        <taxon>Pseudomonadati</taxon>
        <taxon>Thermodesulfobacteriota</taxon>
        <taxon>Desulfovibrionia</taxon>
        <taxon>Desulfovibrionales</taxon>
        <taxon>Desulfovibrionaceae</taxon>
        <taxon>Nitratidesulfovibrio</taxon>
    </lineage>
</organism>
<dbReference type="EC" id="2.5.1.78" evidence="1"/>
<dbReference type="EMBL" id="CP001197">
    <property type="protein sequence ID" value="ACL10029.1"/>
    <property type="molecule type" value="Genomic_DNA"/>
</dbReference>
<dbReference type="SMR" id="B8DJF2"/>
<dbReference type="STRING" id="883.DvMF_3092"/>
<dbReference type="KEGG" id="dvm:DvMF_3092"/>
<dbReference type="eggNOG" id="COG0054">
    <property type="taxonomic scope" value="Bacteria"/>
</dbReference>
<dbReference type="HOGENOM" id="CLU_089358_1_1_7"/>
<dbReference type="OrthoDB" id="9809709at2"/>
<dbReference type="UniPathway" id="UPA00275">
    <property type="reaction ID" value="UER00404"/>
</dbReference>
<dbReference type="GO" id="GO:0005829">
    <property type="term" value="C:cytosol"/>
    <property type="evidence" value="ECO:0007669"/>
    <property type="project" value="TreeGrafter"/>
</dbReference>
<dbReference type="GO" id="GO:0009349">
    <property type="term" value="C:riboflavin synthase complex"/>
    <property type="evidence" value="ECO:0007669"/>
    <property type="project" value="InterPro"/>
</dbReference>
<dbReference type="GO" id="GO:0000906">
    <property type="term" value="F:6,7-dimethyl-8-ribityllumazine synthase activity"/>
    <property type="evidence" value="ECO:0007669"/>
    <property type="project" value="UniProtKB-UniRule"/>
</dbReference>
<dbReference type="GO" id="GO:0009231">
    <property type="term" value="P:riboflavin biosynthetic process"/>
    <property type="evidence" value="ECO:0007669"/>
    <property type="project" value="UniProtKB-UniRule"/>
</dbReference>
<dbReference type="CDD" id="cd09209">
    <property type="entry name" value="Lumazine_synthase-I"/>
    <property type="match status" value="1"/>
</dbReference>
<dbReference type="FunFam" id="3.40.50.960:FF:000001">
    <property type="entry name" value="6,7-dimethyl-8-ribityllumazine synthase"/>
    <property type="match status" value="1"/>
</dbReference>
<dbReference type="Gene3D" id="3.40.50.960">
    <property type="entry name" value="Lumazine/riboflavin synthase"/>
    <property type="match status" value="1"/>
</dbReference>
<dbReference type="HAMAP" id="MF_00178">
    <property type="entry name" value="Lumazine_synth"/>
    <property type="match status" value="1"/>
</dbReference>
<dbReference type="InterPro" id="IPR034964">
    <property type="entry name" value="LS"/>
</dbReference>
<dbReference type="InterPro" id="IPR002180">
    <property type="entry name" value="LS/RS"/>
</dbReference>
<dbReference type="InterPro" id="IPR036467">
    <property type="entry name" value="LS/RS_sf"/>
</dbReference>
<dbReference type="NCBIfam" id="TIGR00114">
    <property type="entry name" value="lumazine-synth"/>
    <property type="match status" value="1"/>
</dbReference>
<dbReference type="NCBIfam" id="NF000812">
    <property type="entry name" value="PRK00061.1-4"/>
    <property type="match status" value="1"/>
</dbReference>
<dbReference type="PANTHER" id="PTHR21058:SF0">
    <property type="entry name" value="6,7-DIMETHYL-8-RIBITYLLUMAZINE SYNTHASE"/>
    <property type="match status" value="1"/>
</dbReference>
<dbReference type="PANTHER" id="PTHR21058">
    <property type="entry name" value="6,7-DIMETHYL-8-RIBITYLLUMAZINE SYNTHASE DMRL SYNTHASE LUMAZINE SYNTHASE"/>
    <property type="match status" value="1"/>
</dbReference>
<dbReference type="Pfam" id="PF00885">
    <property type="entry name" value="DMRL_synthase"/>
    <property type="match status" value="1"/>
</dbReference>
<dbReference type="SUPFAM" id="SSF52121">
    <property type="entry name" value="Lumazine synthase"/>
    <property type="match status" value="1"/>
</dbReference>